<evidence type="ECO:0000250" key="1">
    <source>
        <dbReference type="UniProtKB" id="P51787"/>
    </source>
</evidence>
<evidence type="ECO:0000250" key="2">
    <source>
        <dbReference type="UniProtKB" id="P97414"/>
    </source>
</evidence>
<evidence type="ECO:0000250" key="3">
    <source>
        <dbReference type="UniProtKB" id="Q9Z0N7"/>
    </source>
</evidence>
<evidence type="ECO:0000255" key="4"/>
<evidence type="ECO:0000256" key="5">
    <source>
        <dbReference type="SAM" id="MobiDB-lite"/>
    </source>
</evidence>
<evidence type="ECO:0000305" key="6"/>
<name>KCNQ1_FELCA</name>
<gene>
    <name evidence="1" type="primary">KCNQ1</name>
    <name evidence="1" type="synonym">KVLQT1</name>
</gene>
<reference key="1">
    <citation type="journal article" date="2007" name="Genome Res.">
        <title>Initial sequence and comparative analysis of the cat genome.</title>
        <authorList>
            <person name="Pontius J.U."/>
            <person name="Mullikin J.C."/>
            <person name="Smith D.R."/>
            <person name="Lindblad-Toh K."/>
            <person name="Gnerre S."/>
            <person name="Clamp M."/>
            <person name="Chang J."/>
            <person name="Stephens R."/>
            <person name="Neelam B."/>
            <person name="Volfovsky N."/>
            <person name="Schaffer A.A."/>
            <person name="Agarwala R."/>
            <person name="Narfstrom K."/>
            <person name="Murphy W.J."/>
            <person name="Giger U."/>
            <person name="Roca A.L."/>
            <person name="Antunes A."/>
            <person name="Menotti-Raymond M."/>
            <person name="Yuhki N."/>
            <person name="Pecon-Slattery J."/>
            <person name="Johnson W.E."/>
            <person name="Bourque G."/>
            <person name="Tesler G."/>
            <person name="O'Brien S.J."/>
        </authorList>
    </citation>
    <scope>NUCLEOTIDE SEQUENCE [LARGE SCALE GENOMIC DNA]</scope>
    <source>
        <strain>Abyssinian</strain>
    </source>
</reference>
<reference key="2">
    <citation type="submission" date="1997-07" db="EMBL/GenBank/DDBJ databases">
        <title>Expression of minK and KvLQT1 mRNA in cat tissues: a genetic evidence for the cardiac IKs channel.</title>
        <authorList>
            <person name="Chen L.-S.K."/>
        </authorList>
    </citation>
    <scope>NUCLEOTIDE SEQUENCE [MRNA] OF 104-275</scope>
    <source>
        <tissue>Heart</tissue>
    </source>
</reference>
<dbReference type="EMBL" id="AANG02067979">
    <property type="status" value="NOT_ANNOTATED_CDS"/>
    <property type="molecule type" value="Genomic_DNA"/>
</dbReference>
<dbReference type="EMBL" id="AANG02067981">
    <property type="status" value="NOT_ANNOTATED_CDS"/>
    <property type="molecule type" value="Genomic_DNA"/>
</dbReference>
<dbReference type="EMBL" id="AANG02067980">
    <property type="status" value="NOT_ANNOTATED_CDS"/>
    <property type="molecule type" value="Genomic_DNA"/>
</dbReference>
<dbReference type="EMBL" id="AANG03336025">
    <property type="status" value="NOT_ANNOTATED_CDS"/>
    <property type="molecule type" value="Genomic_DNA"/>
</dbReference>
<dbReference type="EMBL" id="AANG03336026">
    <property type="status" value="NOT_ANNOTATED_CDS"/>
    <property type="molecule type" value="Genomic_DNA"/>
</dbReference>
<dbReference type="EMBL" id="AANG03336027">
    <property type="status" value="NOT_ANNOTATED_CDS"/>
    <property type="molecule type" value="Genomic_DNA"/>
</dbReference>
<dbReference type="EMBL" id="AANG03336028">
    <property type="status" value="NOT_ANNOTATED_CDS"/>
    <property type="molecule type" value="Genomic_DNA"/>
</dbReference>
<dbReference type="EMBL" id="AANG03336029">
    <property type="status" value="NOT_ANNOTATED_CDS"/>
    <property type="molecule type" value="Genomic_DNA"/>
</dbReference>
<dbReference type="EMBL" id="AANG03336030">
    <property type="status" value="NOT_ANNOTATED_CDS"/>
    <property type="molecule type" value="Genomic_DNA"/>
</dbReference>
<dbReference type="EMBL" id="AANG03336031">
    <property type="status" value="NOT_ANNOTATED_CDS"/>
    <property type="molecule type" value="Genomic_DNA"/>
</dbReference>
<dbReference type="EMBL" id="AANG03336032">
    <property type="status" value="NOT_ANNOTATED_CDS"/>
    <property type="molecule type" value="Genomic_DNA"/>
</dbReference>
<dbReference type="EMBL" id="AANG03336033">
    <property type="status" value="NOT_ANNOTATED_CDS"/>
    <property type="molecule type" value="Genomic_DNA"/>
</dbReference>
<dbReference type="EMBL" id="AANG03336034">
    <property type="status" value="NOT_ANNOTATED_CDS"/>
    <property type="molecule type" value="Genomic_DNA"/>
</dbReference>
<dbReference type="EMBL" id="AANG03336035">
    <property type="status" value="NOT_ANNOTATED_CDS"/>
    <property type="molecule type" value="Genomic_DNA"/>
</dbReference>
<dbReference type="EMBL" id="AANG03336036">
    <property type="status" value="NOT_ANNOTATED_CDS"/>
    <property type="molecule type" value="Genomic_DNA"/>
</dbReference>
<dbReference type="EMBL" id="AANG03336037">
    <property type="status" value="NOT_ANNOTATED_CDS"/>
    <property type="molecule type" value="Genomic_DNA"/>
</dbReference>
<dbReference type="EMBL" id="AANG03336038">
    <property type="status" value="NOT_ANNOTATED_CDS"/>
    <property type="molecule type" value="Genomic_DNA"/>
</dbReference>
<dbReference type="EMBL" id="AANG03336039">
    <property type="status" value="NOT_ANNOTATED_CDS"/>
    <property type="molecule type" value="Genomic_DNA"/>
</dbReference>
<dbReference type="EMBL" id="AANG03336040">
    <property type="status" value="NOT_ANNOTATED_CDS"/>
    <property type="molecule type" value="Genomic_DNA"/>
</dbReference>
<dbReference type="EMBL" id="AANG03336041">
    <property type="status" value="NOT_ANNOTATED_CDS"/>
    <property type="molecule type" value="Genomic_DNA"/>
</dbReference>
<dbReference type="EMBL" id="AANG03336042">
    <property type="status" value="NOT_ANNOTATED_CDS"/>
    <property type="molecule type" value="Genomic_DNA"/>
</dbReference>
<dbReference type="EMBL" id="AANG03336043">
    <property type="status" value="NOT_ANNOTATED_CDS"/>
    <property type="molecule type" value="Genomic_DNA"/>
</dbReference>
<dbReference type="EMBL" id="AANG03336044">
    <property type="status" value="NOT_ANNOTATED_CDS"/>
    <property type="molecule type" value="Genomic_DNA"/>
</dbReference>
<dbReference type="EMBL" id="AANG03336045">
    <property type="status" value="NOT_ANNOTATED_CDS"/>
    <property type="molecule type" value="Genomic_DNA"/>
</dbReference>
<dbReference type="EMBL" id="AANG03336046">
    <property type="status" value="NOT_ANNOTATED_CDS"/>
    <property type="molecule type" value="Genomic_DNA"/>
</dbReference>
<dbReference type="EMBL" id="AF013961">
    <property type="protein sequence ID" value="AAC98890.1"/>
    <property type="molecule type" value="mRNA"/>
</dbReference>
<dbReference type="SMR" id="O97531"/>
<dbReference type="STRING" id="9685.ENSFCAP00000044776"/>
<dbReference type="GlyCosmos" id="O97531">
    <property type="glycosylation" value="1 site, No reported glycans"/>
</dbReference>
<dbReference type="PaxDb" id="9685-ENSFCAP00000006446"/>
<dbReference type="eggNOG" id="KOG1419">
    <property type="taxonomic scope" value="Eukaryota"/>
</dbReference>
<dbReference type="InParanoid" id="O97531"/>
<dbReference type="Proteomes" id="UP000011712">
    <property type="component" value="Unplaced"/>
</dbReference>
<dbReference type="GO" id="GO:0016323">
    <property type="term" value="C:basolateral plasma membrane"/>
    <property type="evidence" value="ECO:0000250"/>
    <property type="project" value="UniProtKB"/>
</dbReference>
<dbReference type="GO" id="GO:0005737">
    <property type="term" value="C:cytoplasm"/>
    <property type="evidence" value="ECO:0000250"/>
    <property type="project" value="UniProtKB"/>
</dbReference>
<dbReference type="GO" id="GO:0030659">
    <property type="term" value="C:cytoplasmic vesicle membrane"/>
    <property type="evidence" value="ECO:0007669"/>
    <property type="project" value="UniProtKB-SubCell"/>
</dbReference>
<dbReference type="GO" id="GO:0005769">
    <property type="term" value="C:early endosome"/>
    <property type="evidence" value="ECO:0007669"/>
    <property type="project" value="UniProtKB-SubCell"/>
</dbReference>
<dbReference type="GO" id="GO:0005783">
    <property type="term" value="C:endoplasmic reticulum"/>
    <property type="evidence" value="ECO:0007669"/>
    <property type="project" value="UniProtKB-SubCell"/>
</dbReference>
<dbReference type="GO" id="GO:0016020">
    <property type="term" value="C:membrane"/>
    <property type="evidence" value="ECO:0000318"/>
    <property type="project" value="GO_Central"/>
</dbReference>
<dbReference type="GO" id="GO:0045121">
    <property type="term" value="C:membrane raft"/>
    <property type="evidence" value="ECO:0000250"/>
    <property type="project" value="UniProtKB"/>
</dbReference>
<dbReference type="GO" id="GO:0034702">
    <property type="term" value="C:monoatomic ion channel complex"/>
    <property type="evidence" value="ECO:0000250"/>
    <property type="project" value="UniProtKB"/>
</dbReference>
<dbReference type="GO" id="GO:0005886">
    <property type="term" value="C:plasma membrane"/>
    <property type="evidence" value="ECO:0000250"/>
    <property type="project" value="UniProtKB"/>
</dbReference>
<dbReference type="GO" id="GO:0008076">
    <property type="term" value="C:voltage-gated potassium channel complex"/>
    <property type="evidence" value="ECO:0000318"/>
    <property type="project" value="GO_Central"/>
</dbReference>
<dbReference type="GO" id="GO:0005516">
    <property type="term" value="F:calmodulin binding"/>
    <property type="evidence" value="ECO:0007669"/>
    <property type="project" value="UniProtKB-KW"/>
</dbReference>
<dbReference type="GO" id="GO:0005251">
    <property type="term" value="F:delayed rectifier potassium channel activity"/>
    <property type="evidence" value="ECO:0000250"/>
    <property type="project" value="UniProtKB"/>
</dbReference>
<dbReference type="GO" id="GO:0015271">
    <property type="term" value="F:outward rectifier potassium channel activity"/>
    <property type="evidence" value="ECO:0000250"/>
    <property type="project" value="UniProtKB"/>
</dbReference>
<dbReference type="GO" id="GO:0005546">
    <property type="term" value="F:phosphatidylinositol-4,5-bisphosphate binding"/>
    <property type="evidence" value="ECO:0000250"/>
    <property type="project" value="UniProtKB"/>
</dbReference>
<dbReference type="GO" id="GO:0005249">
    <property type="term" value="F:voltage-gated potassium channel activity"/>
    <property type="evidence" value="ECO:0000250"/>
    <property type="project" value="UniProtKB"/>
</dbReference>
<dbReference type="GO" id="GO:0086089">
    <property type="term" value="F:voltage-gated potassium channel activity involved in atrial cardiac muscle cell action potential repolarization"/>
    <property type="evidence" value="ECO:0000318"/>
    <property type="project" value="GO_Central"/>
</dbReference>
<dbReference type="GO" id="GO:1902282">
    <property type="term" value="F:voltage-gated potassium channel activity involved in ventricular cardiac muscle cell action potential repolarization"/>
    <property type="evidence" value="ECO:0000318"/>
    <property type="project" value="GO_Central"/>
</dbReference>
<dbReference type="GO" id="GO:0001508">
    <property type="term" value="P:action potential"/>
    <property type="evidence" value="ECO:0000318"/>
    <property type="project" value="GO_Central"/>
</dbReference>
<dbReference type="GO" id="GO:0048839">
    <property type="term" value="P:inner ear development"/>
    <property type="evidence" value="ECO:0000250"/>
    <property type="project" value="UniProtKB"/>
</dbReference>
<dbReference type="GO" id="GO:0050892">
    <property type="term" value="P:intestinal absorption"/>
    <property type="evidence" value="ECO:0000250"/>
    <property type="project" value="UniProtKB"/>
</dbReference>
<dbReference type="GO" id="GO:0086009">
    <property type="term" value="P:membrane repolarization"/>
    <property type="evidence" value="ECO:0000250"/>
    <property type="project" value="UniProtKB"/>
</dbReference>
<dbReference type="GO" id="GO:0098915">
    <property type="term" value="P:membrane repolarization during ventricular cardiac muscle cell action potential"/>
    <property type="evidence" value="ECO:0000318"/>
    <property type="project" value="GO_Central"/>
</dbReference>
<dbReference type="GO" id="GO:0097623">
    <property type="term" value="P:potassium ion export across plasma membrane"/>
    <property type="evidence" value="ECO:0000318"/>
    <property type="project" value="GO_Central"/>
</dbReference>
<dbReference type="GO" id="GO:0060453">
    <property type="term" value="P:regulation of gastric acid secretion"/>
    <property type="evidence" value="ECO:0000250"/>
    <property type="project" value="UniProtKB"/>
</dbReference>
<dbReference type="GO" id="GO:0070293">
    <property type="term" value="P:renal absorption"/>
    <property type="evidence" value="ECO:0000250"/>
    <property type="project" value="UniProtKB"/>
</dbReference>
<dbReference type="FunFam" id="1.10.287.70:FF:000113">
    <property type="entry name" value="Potassium voltage-gated channel subfamily KQT member 1"/>
    <property type="match status" value="1"/>
</dbReference>
<dbReference type="FunFam" id="1.20.120.350:FF:000017">
    <property type="entry name" value="potassium voltage-gated channel subfamily KQT member 1"/>
    <property type="match status" value="1"/>
</dbReference>
<dbReference type="Gene3D" id="1.10.287.70">
    <property type="match status" value="1"/>
</dbReference>
<dbReference type="Gene3D" id="6.10.140.1910">
    <property type="match status" value="2"/>
</dbReference>
<dbReference type="Gene3D" id="1.20.120.350">
    <property type="entry name" value="Voltage-gated potassium channels. Chain C"/>
    <property type="match status" value="1"/>
</dbReference>
<dbReference type="InterPro" id="IPR005821">
    <property type="entry name" value="Ion_trans_dom"/>
</dbReference>
<dbReference type="InterPro" id="IPR003937">
    <property type="entry name" value="K_chnl_volt-dep_KCNQ"/>
</dbReference>
<dbReference type="InterPro" id="IPR013821">
    <property type="entry name" value="K_chnl_volt-dep_KCNQ_C"/>
</dbReference>
<dbReference type="InterPro" id="IPR005827">
    <property type="entry name" value="K_chnl_volt-dep_KCQN1"/>
</dbReference>
<dbReference type="InterPro" id="IPR027359">
    <property type="entry name" value="Volt_channel_dom_sf"/>
</dbReference>
<dbReference type="PANTHER" id="PTHR47735:SF14">
    <property type="entry name" value="POTASSIUM VOLTAGE-GATED CHANNEL SUBFAMILY KQT MEMBER 1"/>
    <property type="match status" value="1"/>
</dbReference>
<dbReference type="PANTHER" id="PTHR47735">
    <property type="entry name" value="POTASSIUM VOLTAGE-GATED CHANNEL SUBFAMILY KQT MEMBER 4"/>
    <property type="match status" value="1"/>
</dbReference>
<dbReference type="Pfam" id="PF00520">
    <property type="entry name" value="Ion_trans"/>
    <property type="match status" value="1"/>
</dbReference>
<dbReference type="Pfam" id="PF03520">
    <property type="entry name" value="KCNQ_channel"/>
    <property type="match status" value="1"/>
</dbReference>
<dbReference type="PRINTS" id="PR00169">
    <property type="entry name" value="KCHANNEL"/>
</dbReference>
<dbReference type="PRINTS" id="PR01460">
    <property type="entry name" value="KCNQ1CHANNEL"/>
</dbReference>
<dbReference type="PRINTS" id="PR01459">
    <property type="entry name" value="KCNQCHANNEL"/>
</dbReference>
<dbReference type="SUPFAM" id="SSF81324">
    <property type="entry name" value="Voltage-gated potassium channels"/>
    <property type="match status" value="1"/>
</dbReference>
<sequence>RVSIYSARRPLLARTHIQGRVYNFLERPTGWKCFVYHFAVFLIVLVCLIFSVLSTIEQYVALATGTLFWMEIVLVVFFGTEYVVRLWSAGCRSKYVGVWGRLRFARKPISIIDLIVVLASMVVLCVGSKGQVFATSAIRGIRFLQILRMLHVDRQGGTWRLLGSVVFIHRQELITTLYIGFLGLIFSSYFVYLAEKDAVNESGQVEFGSYADALWWGVVTVTTIGYGDKVPQTWVGKTIASCFSVFAISFFALPAGILGSGFALKVQQKQRQKHFNRQIPAAASLIQTAWRCYAAENPESSTWNIYVRKPTRSHTLLSPSPKPKKSVMVKKKKFKLDKDNGVSPGEKTLTVPHITCEPVSEKRRPDHFSVDTCDSSVKSPMLLEVSTTHFLRTNSVAEDLDLEGETPLVPITHVSQLREHHRATIKVIRRMQYFVAKKKFQQARKPYDVRDVIEQYSQGHLNLMVRIKELQRRLDQSIGKPSLFISVSEKSKDRGSNTIGARLNRVEDKVAQLDQRLVLITDMLQQLLSLHHGGPPGSRPPSGGGAQVQPCGPTNPELFLPGNALPTYEQLTVPRRGPEEGS</sequence>
<comment type="function">
    <text evidence="1 2 3">Pore-forming subunit of the voltage-gated potassium (Kv) channel involved in the regulation of cardiomyocyte excitability and important in normal development and functions of myocardium, inner ear, stomach and colon (By similarity). Associates with KCNE beta subunits that modulates current kinetics (By similarity). Induces a voltage-dependent by rapidly activating and slowly deactivating potassium-selective outward current (By similarity). Also promotes a delayed voltage activated potassium current showing outward rectification characteristic (By similarity). During beta-adrenergic receptor stimulation participates in cardiac repolarization by associating with KCNE1 to form the I(Ks) cardiac potassium current that increases the amplitude and slows down the activation kinetics of outward potassium current I(Ks) (By similarity). Muscarinic agonist oxotremorine-M strongly suppresses KCNQ1/KCNE1 current (By similarity). When associated with KCNE3, forms the potassium channel that is important for cyclic AMP-stimulated intestinal secretion of chloride ions (By similarity). This interaction with KCNE3 is reduced by 17beta-estradiol, resulting in the reduction of currents (By similarity). During conditions of increased substrate load, maintains the driving force for proximal tubular and intestinal sodium ions absorption, gastric acid secretion, and cAMP-induced jejunal chloride ions secretion (By similarity). Allows the provision of potassium ions to the luminal membrane of the secretory canaliculus in the resting state as well as during stimulated acid secretion (By similarity). When associated with KCNE2, forms a heterooligomer complex leading to currents with an apparently instantaneous activation, a rapid deactivation process and a linear current-voltage relationship and decreases the amplitude of the outward current (By similarity). When associated with KCNE4, inhibits voltage-gated potassium channel activity (By similarity). When associated with KCNE5, this complex only conducts current upon strong and continued depolarization (By similarity). Also forms a heterotetramer with KCNQ5 that has a voltage-gated potassium channel activity (By similarity). Binds with phosphatidylinositol 4,5-bisphosphate (By similarity).</text>
</comment>
<comment type="catalytic activity">
    <reaction evidence="1">
        <text>K(+)(in) = K(+)(out)</text>
        <dbReference type="Rhea" id="RHEA:29463"/>
        <dbReference type="ChEBI" id="CHEBI:29103"/>
    </reaction>
</comment>
<comment type="activity regulation">
    <text evidence="1">PIP2 molecule is essential to activate KCNQ channels by inducing the coupling of the voltage-sensing domain (VSD) and the pore-forming domain (PD). Upon channel activation, PIP2 disrupts the VSD-calmodulin/CALM interactions, causing the release of CALM from the VSD which triggers the opening of the gate. Calcium potentiates KCNQ1 channel current through calcium-bound CALM. Calcium-bound CALM competes with PIP2 to stabilize the channel open state.</text>
</comment>
<comment type="subunit">
    <text evidence="1">Tetramer. Heterotetramer with KCNE1; targets to the membrane raft. Interacts (via C-terminus) with CALM; forms a heterooctameric structure (with 4:4 KCNQ1:CALM stoichiometry) in a calcium-independent manner. Interacts with AKAP9; targets protein kinase A (PKA) catalytic and regulatory subunits and protein phosphatase 1 (PP1) to the KCNQ1-KCNE1 complex, allowing PKA-mediated phosphorylation and increase of delayed rectifier potassium channel activity. Interacts with KCNE2; form a heterooligomer complex that targets to the membrane raft and leading to currents with an apparently instantaneous activation, a rapid deactivation process and a linear current-voltage relationship and decreases the amplitude of the outward current. Interacts with AP2M1; mediates estrogen-induced internalization via clathrin-coated vesicles. Interacts with NEDD4L; promotes internalization and decreases I(Ks) currents. Interacts with USP2; counteracts the NEDD4L-specific down-regulation of I(Ks) and restore plasma membrane localization. Heterotetramer with KCNQ5; has a voltage-gated potassium channel activity. Interacts with KCNE3; four KCNE3 molecules are bound to one KCNQ1 tetramer (4:4 KCNQ1:KCNE3 stoichiometry); alters membrane raft localization; affects KCNQ1 structure and gating properties. Interacts with KCNE4; impairs KCNQ1 localization in lipid rafts and inhibits voltage-gated potassium channel activity. Interacts with KCNE5; impairs KCNQ1 localization in lipid rafts and only conducts current upon strong and continued depolarization.</text>
</comment>
<comment type="subcellular location">
    <subcellularLocation>
        <location evidence="1">Cell membrane</location>
        <topology evidence="1">Multi-pass membrane protein</topology>
    </subcellularLocation>
    <subcellularLocation>
        <location evidence="1">Cytoplasmic vesicle membrane</location>
    </subcellularLocation>
    <subcellularLocation>
        <location evidence="1">Early endosome</location>
    </subcellularLocation>
    <subcellularLocation>
        <location evidence="1">Membrane raft</location>
    </subcellularLocation>
    <subcellularLocation>
        <location evidence="1">Endoplasmic reticulum</location>
    </subcellularLocation>
    <subcellularLocation>
        <location evidence="1">Basolateral cell membrane</location>
    </subcellularLocation>
    <text evidence="1">Colocalized with KCNE3 at the plasma membrane. Upon 17beta-oestradiol treatment, colocalizes with RAB5A at early endosome. Heterotetramer with KCNQ5 is highly retained at the endoplasmic reticulum and is localized outside of lipid raft microdomains. During the early stages of epithelial cell polarization induced by the calcium switch it is removed from the plasma membrane to the endoplasmic reticulum, where it is retained, and redistributed to the basolateral cell surface in a PI3K-dependent manner at a later stage.</text>
</comment>
<comment type="domain">
    <text evidence="1">Each channel subunit contains six transmembrane segments (S1-S6) with S1-S4 forming one voltage sensing domain (VSD) and S5-S6 contributing to form one quarter of an interlocking pore-forming domain (PD).</text>
</comment>
<comment type="domain">
    <text evidence="1">The segment S6 is involved in the inhibition of voltage-gated potassium channel activity by KCNE4.</text>
</comment>
<comment type="domain">
    <text evidence="1">The CALM binding domains correspond to the first two membrane-proximal helical regions that interact with a single calmodulin/CALM molecule forming a clamp-like structure. Binding of CALM C-terminus to the first helix is calcium-independent and is essential for assembly of the structure. Binding of CALM N-terminus to the second helix is calcium-dependent and regulates electrophysiological activity of the channel.</text>
</comment>
<comment type="domain">
    <text evidence="1">The C-terminal assembly domain carries the major determinants of tetramerization and subunit assembly specificity. Its coiled-coil region is four-stranded.</text>
</comment>
<comment type="PTM">
    <text evidence="1">Phosphorylated by PKA; increases delayed rectifier potassium channel activity of the KCNQ1-KCNE1 complex through a macromolecular complex that includes PKA, PP1, and the targeting protein AKAP9.</text>
</comment>
<comment type="PTM">
    <text evidence="1">Ubiquitinated by NEDD4L; promotes internalization. The ubiquitinylated form is internalized through a clathrin-mediated endocytosis by interacting with AP2M1 and is recycled back to the cell membrane via RAB4A and RAB11A.</text>
</comment>
<comment type="PTM">
    <text evidence="1">Deubiquitinated by USP2; counteracts the NEDD4L-specific down-regulation of I(Ks) and restores the membrane localization.</text>
</comment>
<comment type="similarity">
    <text evidence="6">Belongs to the potassium channel family. KQT (TC 1.A.1.15) subfamily. Kv7.1/KCNQ1 sub-subfamily.</text>
</comment>
<keyword id="KW-0112">Calmodulin-binding</keyword>
<keyword id="KW-1003">Cell membrane</keyword>
<keyword id="KW-0175">Coiled coil</keyword>
<keyword id="KW-0968">Cytoplasmic vesicle</keyword>
<keyword id="KW-0256">Endoplasmic reticulum</keyword>
<keyword id="KW-0967">Endosome</keyword>
<keyword id="KW-0325">Glycoprotein</keyword>
<keyword id="KW-0407">Ion channel</keyword>
<keyword id="KW-0406">Ion transport</keyword>
<keyword id="KW-0472">Membrane</keyword>
<keyword id="KW-0597">Phosphoprotein</keyword>
<keyword id="KW-0630">Potassium</keyword>
<keyword id="KW-0631">Potassium channel</keyword>
<keyword id="KW-0633">Potassium transport</keyword>
<keyword id="KW-1185">Reference proteome</keyword>
<keyword id="KW-0812">Transmembrane</keyword>
<keyword id="KW-1133">Transmembrane helix</keyword>
<keyword id="KW-0813">Transport</keyword>
<keyword id="KW-0832">Ubl conjugation</keyword>
<keyword id="KW-0851">Voltage-gated channel</keyword>
<feature type="chain" id="PRO_0000054023" description="Potassium voltage-gated channel subfamily KQT member 1">
    <location>
        <begin position="1" status="less than"/>
        <end position="582"/>
    </location>
</feature>
<feature type="topological domain" description="Cytoplasmic" evidence="6">
    <location>
        <begin position="1"/>
        <end position="31"/>
    </location>
</feature>
<feature type="transmembrane region" description="Helical; Name=Segment S1" evidence="1">
    <location>
        <begin position="32"/>
        <end position="53"/>
    </location>
</feature>
<feature type="topological domain" description="Extracellular" evidence="6">
    <location>
        <begin position="54"/>
        <end position="64"/>
    </location>
</feature>
<feature type="transmembrane region" description="Helical; Name=Segment S2" evidence="1">
    <location>
        <begin position="65"/>
        <end position="87"/>
    </location>
</feature>
<feature type="topological domain" description="Cytoplasmic" evidence="6">
    <location>
        <begin position="88"/>
        <end position="103"/>
    </location>
</feature>
<feature type="transmembrane region" description="Helical; Name=Segment S3" evidence="1">
    <location>
        <begin position="104"/>
        <end position="129"/>
    </location>
</feature>
<feature type="topological domain" description="Extracellular" evidence="6">
    <location>
        <begin position="130"/>
        <end position="137"/>
    </location>
</feature>
<feature type="transmembrane region" description="Helical; Voltage-sensor; Name=Segment S4" evidence="1">
    <location>
        <begin position="138"/>
        <end position="153"/>
    </location>
</feature>
<feature type="topological domain" description="Cytoplasmic" evidence="6">
    <location>
        <begin position="154"/>
        <end position="171"/>
    </location>
</feature>
<feature type="transmembrane region" description="Helical; Name=Segment S5" evidence="1">
    <location>
        <begin position="172"/>
        <end position="194"/>
    </location>
</feature>
<feature type="topological domain" description="Extracellular" evidence="6">
    <location>
        <begin position="195"/>
        <end position="210"/>
    </location>
</feature>
<feature type="intramembrane region" description="Pore-forming; Name=Segment H5" evidence="1">
    <location>
        <begin position="211"/>
        <end position="231"/>
    </location>
</feature>
<feature type="topological domain" description="Extracellular" evidence="6">
    <location>
        <begin position="232"/>
        <end position="233"/>
    </location>
</feature>
<feature type="transmembrane region" description="Helical; Name=Segment S6" evidence="1">
    <location>
        <begin position="234"/>
        <end position="259"/>
    </location>
</feature>
<feature type="topological domain" description="Cytoplasmic" evidence="6">
    <location>
        <begin position="260"/>
        <end position="582"/>
    </location>
</feature>
<feature type="region of interest" description="Interaction with KCNE3" evidence="1">
    <location>
        <begin position="149"/>
        <end position="157"/>
    </location>
</feature>
<feature type="region of interest" description="Interaction with CALM" evidence="1">
    <location>
        <begin position="281"/>
        <end position="293"/>
    </location>
</feature>
<feature type="region of interest" description="Interaction with CALM; calcium-dependent" evidence="1">
    <location>
        <begin position="426"/>
        <end position="440"/>
    </location>
</feature>
<feature type="region of interest" description="Interaction with KCNE1 C-terminus" evidence="1">
    <location>
        <begin position="446"/>
        <end position="483"/>
    </location>
</feature>
<feature type="region of interest" description="Interaction with AKAP9" evidence="1">
    <location>
        <begin position="499"/>
        <end position="527"/>
    </location>
</feature>
<feature type="region of interest" description="C-terminal assembly domain (tetramerization)" evidence="1">
    <location>
        <begin position="500"/>
        <end position="531"/>
    </location>
</feature>
<feature type="region of interest" description="Disordered" evidence="5">
    <location>
        <begin position="530"/>
        <end position="582"/>
    </location>
</feature>
<feature type="coiled-coil region" evidence="1">
    <location>
        <begin position="496"/>
        <end position="532"/>
    </location>
</feature>
<feature type="binding site" evidence="1">
    <location>
        <position position="155"/>
    </location>
    <ligand>
        <name>a 1,2-diacyl-sn-glycero-3-phospho-(1D-myo-inositol-4,5-bisphosphate)</name>
        <dbReference type="ChEBI" id="CHEBI:58456"/>
    </ligand>
</feature>
<feature type="modified residue" description="Phosphoserine" evidence="2">
    <location>
        <position position="318"/>
    </location>
</feature>
<feature type="modified residue" description="Phosphoserine" evidence="2">
    <location>
        <position position="320"/>
    </location>
</feature>
<feature type="glycosylation site" description="N-linked (GlcNAc...) asparagine" evidence="4">
    <location>
        <position position="200"/>
    </location>
</feature>
<feature type="non-terminal residue">
    <location>
        <position position="1"/>
    </location>
</feature>
<accession>O97531</accession>
<accession>M3W6T1</accession>
<proteinExistence type="evidence at transcript level"/>
<protein>
    <recommendedName>
        <fullName evidence="1">Potassium voltage-gated channel subfamily KQT member 1</fullName>
    </recommendedName>
    <alternativeName>
        <fullName evidence="1">IKs producing slow voltage-gated potassium channel subunit alpha KvLQT1</fullName>
    </alternativeName>
    <alternativeName>
        <fullName evidence="1">KQT-like 1</fullName>
    </alternativeName>
    <alternativeName>
        <fullName evidence="1">Voltage-gated potassium channel subunit Kv7.1</fullName>
    </alternativeName>
</protein>
<organism>
    <name type="scientific">Felis catus</name>
    <name type="common">Cat</name>
    <name type="synonym">Felis silvestris catus</name>
    <dbReference type="NCBI Taxonomy" id="9685"/>
    <lineage>
        <taxon>Eukaryota</taxon>
        <taxon>Metazoa</taxon>
        <taxon>Chordata</taxon>
        <taxon>Craniata</taxon>
        <taxon>Vertebrata</taxon>
        <taxon>Euteleostomi</taxon>
        <taxon>Mammalia</taxon>
        <taxon>Eutheria</taxon>
        <taxon>Laurasiatheria</taxon>
        <taxon>Carnivora</taxon>
        <taxon>Feliformia</taxon>
        <taxon>Felidae</taxon>
        <taxon>Felinae</taxon>
        <taxon>Felis</taxon>
    </lineage>
</organism>